<keyword id="KW-0119">Carbohydrate metabolism</keyword>
<keyword id="KW-0325">Glycoprotein</keyword>
<keyword id="KW-0333">Golgi apparatus</keyword>
<keyword id="KW-0472">Membrane</keyword>
<keyword id="KW-1185">Reference proteome</keyword>
<keyword id="KW-0735">Signal-anchor</keyword>
<keyword id="KW-0808">Transferase</keyword>
<keyword id="KW-0812">Transmembrane</keyword>
<keyword id="KW-1133">Transmembrane helix</keyword>
<proteinExistence type="evidence at transcript level"/>
<accession>Q805E5</accession>
<name>CHSTE_DANRE</name>
<comment type="function">
    <text evidence="1">Catalyzes the transfer of sulfate to position 4 of the N-acetylgalactosamine (GalNAc) residue of dermatan sulfate.</text>
</comment>
<comment type="subcellular location">
    <subcellularLocation>
        <location evidence="1">Golgi apparatus membrane</location>
        <topology evidence="1">Single-pass type II membrane protein</topology>
    </subcellularLocation>
</comment>
<comment type="similarity">
    <text evidence="3">Belongs to the sulfotransferase 2 family.</text>
</comment>
<protein>
    <recommendedName>
        <fullName>Carbohydrate sulfotransferase 14</fullName>
        <ecNumber>2.8.2.-</ecNumber>
    </recommendedName>
    <alternativeName>
        <fullName>Dermatan 4-sulfotransferase 1</fullName>
        <shortName>D4ST-1</shortName>
        <shortName>zD4ST-1</shortName>
    </alternativeName>
</protein>
<feature type="chain" id="PRO_0000189674" description="Carbohydrate sulfotransferase 14">
    <location>
        <begin position="1"/>
        <end position="367"/>
    </location>
</feature>
<feature type="topological domain" description="Cytoplasmic" evidence="2">
    <location>
        <begin position="1"/>
        <end position="34"/>
    </location>
</feature>
<feature type="transmembrane region" description="Helical; Signal-anchor for type II membrane protein" evidence="2">
    <location>
        <begin position="35"/>
        <end position="55"/>
    </location>
</feature>
<feature type="topological domain" description="Lumenal" evidence="2">
    <location>
        <begin position="56"/>
        <end position="367"/>
    </location>
</feature>
<feature type="binding site" evidence="1">
    <location>
        <begin position="144"/>
        <end position="150"/>
    </location>
    <ligand>
        <name>3'-phosphoadenylyl sulfate</name>
        <dbReference type="ChEBI" id="CHEBI:58339"/>
    </ligand>
</feature>
<feature type="binding site" evidence="1">
    <location>
        <begin position="202"/>
        <end position="210"/>
    </location>
    <ligand>
        <name>3'-phosphoadenylyl sulfate</name>
        <dbReference type="ChEBI" id="CHEBI:58339"/>
    </ligand>
</feature>
<feature type="glycosylation site" description="N-linked (GlcNAc...) asparagine" evidence="2">
    <location>
        <position position="99"/>
    </location>
</feature>
<feature type="glycosylation site" description="N-linked (GlcNAc...) asparagine" evidence="2">
    <location>
        <position position="359"/>
    </location>
</feature>
<gene>
    <name type="primary">chst14</name>
    <name type="synonym">d4st1</name>
</gene>
<reference key="1">
    <citation type="submission" date="2002-07" db="EMBL/GenBank/DDBJ databases">
        <title>Molecular cloning and expression of zebrafish dermatan 4-sulfotransferase.</title>
        <authorList>
            <person name="Mizumoto S."/>
            <person name="Kobayashi N."/>
            <person name="Mikami T."/>
            <person name="Kitagawa H."/>
            <person name="Sugahara K."/>
        </authorList>
    </citation>
    <scope>NUCLEOTIDE SEQUENCE [MRNA]</scope>
</reference>
<organism>
    <name type="scientific">Danio rerio</name>
    <name type="common">Zebrafish</name>
    <name type="synonym">Brachydanio rerio</name>
    <dbReference type="NCBI Taxonomy" id="7955"/>
    <lineage>
        <taxon>Eukaryota</taxon>
        <taxon>Metazoa</taxon>
        <taxon>Chordata</taxon>
        <taxon>Craniata</taxon>
        <taxon>Vertebrata</taxon>
        <taxon>Euteleostomi</taxon>
        <taxon>Actinopterygii</taxon>
        <taxon>Neopterygii</taxon>
        <taxon>Teleostei</taxon>
        <taxon>Ostariophysi</taxon>
        <taxon>Cypriniformes</taxon>
        <taxon>Danionidae</taxon>
        <taxon>Danioninae</taxon>
        <taxon>Danio</taxon>
    </lineage>
</organism>
<evidence type="ECO:0000250" key="1"/>
<evidence type="ECO:0000255" key="2"/>
<evidence type="ECO:0000305" key="3"/>
<dbReference type="EC" id="2.8.2.-"/>
<dbReference type="EMBL" id="AB089140">
    <property type="protein sequence ID" value="BAC55953.1"/>
    <property type="molecule type" value="mRNA"/>
</dbReference>
<dbReference type="RefSeq" id="NP_997994.1">
    <property type="nucleotide sequence ID" value="NM_212829.1"/>
</dbReference>
<dbReference type="FunCoup" id="Q805E5">
    <property type="interactions" value="142"/>
</dbReference>
<dbReference type="STRING" id="7955.ENSDARP00000063151"/>
<dbReference type="GlyCosmos" id="Q805E5">
    <property type="glycosylation" value="2 sites, No reported glycans"/>
</dbReference>
<dbReference type="PaxDb" id="7955-ENSDARP00000063151"/>
<dbReference type="Ensembl" id="ENSDART00000063152">
    <property type="protein sequence ID" value="ENSDARP00000063151"/>
    <property type="gene ID" value="ENSDARG00000043011"/>
</dbReference>
<dbReference type="GeneID" id="404732"/>
<dbReference type="KEGG" id="dre:404732"/>
<dbReference type="AGR" id="ZFIN:ZDB-GENE-040401-3"/>
<dbReference type="CTD" id="113189"/>
<dbReference type="ZFIN" id="ZDB-GENE-040401-3">
    <property type="gene designation" value="chst14"/>
</dbReference>
<dbReference type="eggNOG" id="KOG4651">
    <property type="taxonomic scope" value="Eukaryota"/>
</dbReference>
<dbReference type="HOGENOM" id="CLU_043398_1_3_1"/>
<dbReference type="InParanoid" id="Q805E5"/>
<dbReference type="OMA" id="SQKNMPH"/>
<dbReference type="OrthoDB" id="2019940at2759"/>
<dbReference type="PhylomeDB" id="Q805E5"/>
<dbReference type="TreeFam" id="TF325581"/>
<dbReference type="BRENDA" id="2.8.2.35">
    <property type="organism ID" value="928"/>
</dbReference>
<dbReference type="Reactome" id="R-DRE-2022923">
    <property type="pathway name" value="Dermatan sulfate biosynthesis"/>
</dbReference>
<dbReference type="PRO" id="PR:Q805E5"/>
<dbReference type="Proteomes" id="UP000000437">
    <property type="component" value="Chromosome 20"/>
</dbReference>
<dbReference type="Bgee" id="ENSDARG00000043011">
    <property type="expression patterns" value="Expressed in swim bladder and 28 other cell types or tissues"/>
</dbReference>
<dbReference type="ExpressionAtlas" id="Q805E5">
    <property type="expression patterns" value="baseline and differential"/>
</dbReference>
<dbReference type="GO" id="GO:0000139">
    <property type="term" value="C:Golgi membrane"/>
    <property type="evidence" value="ECO:0007669"/>
    <property type="project" value="UniProtKB-SubCell"/>
</dbReference>
<dbReference type="GO" id="GO:0001537">
    <property type="term" value="F:dermatan 4-sulfotransferase activity"/>
    <property type="evidence" value="ECO:0000250"/>
    <property type="project" value="UniProtKB"/>
</dbReference>
<dbReference type="GO" id="GO:0008146">
    <property type="term" value="F:sulfotransferase activity"/>
    <property type="evidence" value="ECO:0000318"/>
    <property type="project" value="GO_Central"/>
</dbReference>
<dbReference type="GO" id="GO:0016051">
    <property type="term" value="P:carbohydrate biosynthetic process"/>
    <property type="evidence" value="ECO:0007669"/>
    <property type="project" value="InterPro"/>
</dbReference>
<dbReference type="GO" id="GO:0050655">
    <property type="term" value="P:dermatan sulfate proteoglycan metabolic process"/>
    <property type="evidence" value="ECO:0000250"/>
    <property type="project" value="UniProtKB"/>
</dbReference>
<dbReference type="InterPro" id="IPR018011">
    <property type="entry name" value="Carb_sulfotrans_8-10"/>
</dbReference>
<dbReference type="InterPro" id="IPR005331">
    <property type="entry name" value="Sulfotransferase"/>
</dbReference>
<dbReference type="PANTHER" id="PTHR12137">
    <property type="entry name" value="CARBOHYDRATE SULFOTRANSFERASE"/>
    <property type="match status" value="1"/>
</dbReference>
<dbReference type="PANTHER" id="PTHR12137:SF33">
    <property type="entry name" value="CARBOHYDRATE SULFOTRANSFERASE 14"/>
    <property type="match status" value="1"/>
</dbReference>
<dbReference type="Pfam" id="PF03567">
    <property type="entry name" value="Sulfotransfer_2"/>
    <property type="match status" value="1"/>
</dbReference>
<sequence length="367" mass="42857">MPPRKKEYGIKRASGSLVHFRAPVSATTIRRHSAVVPSVLTFAVIVASGGLLLMIEKGMLNSVQTPPPRANGRKVEYRLRSSSDTAADVESQIVQEIRNRTIRSVCGQRNMPHSVWSLSPLQRKTLLQHILVNDEHRFLYCYVPKVACSNWKRVLKVLSGALANVDIKVKMDHRADLVFLSDLPPEEIRHRLRHYFKFMFVREPMARLLSAYRNKFGEIEAYQRKYGAEIIRRYRKGYAKDKKISGNDVTFTEFTRYLVDEDPERMNEHWMPIYNLCQPCAIEYDFIGSYERLESDASYILERVGAPQHVRFPERQTWYKPVTKETLHYYLCTVPQKFLKELLPKYILDFSLFGYPLPNTTTEYCRH</sequence>